<name>Y1710_SYMTH</name>
<proteinExistence type="inferred from homology"/>
<feature type="chain" id="PRO_0000110002" description="UPF0342 protein STH1710">
    <location>
        <begin position="1"/>
        <end position="112"/>
    </location>
</feature>
<keyword id="KW-1185">Reference proteome</keyword>
<protein>
    <recommendedName>
        <fullName evidence="1">UPF0342 protein STH1710</fullName>
    </recommendedName>
</protein>
<dbReference type="EMBL" id="AP006840">
    <property type="protein sequence ID" value="BAD40695.1"/>
    <property type="molecule type" value="Genomic_DNA"/>
</dbReference>
<dbReference type="SMR" id="Q67NP8"/>
<dbReference type="STRING" id="292459.STH1710"/>
<dbReference type="KEGG" id="sth:STH1710"/>
<dbReference type="eggNOG" id="COG3679">
    <property type="taxonomic scope" value="Bacteria"/>
</dbReference>
<dbReference type="HOGENOM" id="CLU_140243_2_0_9"/>
<dbReference type="Proteomes" id="UP000000417">
    <property type="component" value="Chromosome"/>
</dbReference>
<dbReference type="Gene3D" id="1.20.1500.10">
    <property type="entry name" value="YheA/YmcA-like"/>
    <property type="match status" value="1"/>
</dbReference>
<dbReference type="HAMAP" id="MF_01526">
    <property type="entry name" value="UPF0342"/>
    <property type="match status" value="1"/>
</dbReference>
<dbReference type="InterPro" id="IPR010368">
    <property type="entry name" value="Com_YlbF"/>
</dbReference>
<dbReference type="InterPro" id="IPR023378">
    <property type="entry name" value="YheA/YmcA-like_dom_sf"/>
</dbReference>
<dbReference type="Pfam" id="PF06133">
    <property type="entry name" value="Com_YlbF"/>
    <property type="match status" value="1"/>
</dbReference>
<dbReference type="SUPFAM" id="SSF158622">
    <property type="entry name" value="YheA/YmcA-like"/>
    <property type="match status" value="1"/>
</dbReference>
<sequence>MYDHAHSLARALKESQEYKSFQAAREKIKGKPAAEQMIADFHKRQMELQAEVLQGKELTQEQKEGLERLYNVLIQDLDIRDYLMAEQRLGTLLSDVYKIIGEAVDVDLPFTK</sequence>
<comment type="similarity">
    <text evidence="1">Belongs to the UPF0342 family.</text>
</comment>
<evidence type="ECO:0000255" key="1">
    <source>
        <dbReference type="HAMAP-Rule" id="MF_01526"/>
    </source>
</evidence>
<accession>Q67NP8</accession>
<reference key="1">
    <citation type="journal article" date="2004" name="Nucleic Acids Res.">
        <title>Genome sequence of Symbiobacterium thermophilum, an uncultivable bacterium that depends on microbial commensalism.</title>
        <authorList>
            <person name="Ueda K."/>
            <person name="Yamashita A."/>
            <person name="Ishikawa J."/>
            <person name="Shimada M."/>
            <person name="Watsuji T."/>
            <person name="Morimura K."/>
            <person name="Ikeda H."/>
            <person name="Hattori M."/>
            <person name="Beppu T."/>
        </authorList>
    </citation>
    <scope>NUCLEOTIDE SEQUENCE [LARGE SCALE GENOMIC DNA]</scope>
    <source>
        <strain>DSM 24528 / JCM 14929 / IAM 14863 / T</strain>
    </source>
</reference>
<gene>
    <name type="ordered locus">STH1710</name>
</gene>
<organism>
    <name type="scientific">Symbiobacterium thermophilum (strain DSM 24528 / JCM 14929 / IAM 14863 / T)</name>
    <dbReference type="NCBI Taxonomy" id="292459"/>
    <lineage>
        <taxon>Bacteria</taxon>
        <taxon>Bacillati</taxon>
        <taxon>Bacillota</taxon>
        <taxon>Clostridia</taxon>
        <taxon>Eubacteriales</taxon>
        <taxon>Symbiobacteriaceae</taxon>
        <taxon>Symbiobacterium</taxon>
    </lineage>
</organism>